<reference key="1">
    <citation type="journal article" date="2003" name="Mol. Microbiol.">
        <title>Genome-based analysis of virulence genes in a non-biofilm-forming Staphylococcus epidermidis strain (ATCC 12228).</title>
        <authorList>
            <person name="Zhang Y.-Q."/>
            <person name="Ren S.-X."/>
            <person name="Li H.-L."/>
            <person name="Wang Y.-X."/>
            <person name="Fu G."/>
            <person name="Yang J."/>
            <person name="Qin Z.-Q."/>
            <person name="Miao Y.-G."/>
            <person name="Wang W.-Y."/>
            <person name="Chen R.-S."/>
            <person name="Shen Y."/>
            <person name="Chen Z."/>
            <person name="Yuan Z.-H."/>
            <person name="Zhao G.-P."/>
            <person name="Qu D."/>
            <person name="Danchin A."/>
            <person name="Wen Y.-M."/>
        </authorList>
    </citation>
    <scope>NUCLEOTIDE SEQUENCE [LARGE SCALE GENOMIC DNA]</scope>
    <source>
        <strain>ATCC 12228 / FDA PCI 1200</strain>
    </source>
</reference>
<accession>Q8CS62</accession>
<proteinExistence type="inferred from homology"/>
<sequence length="229" mass="25241">MKLSFHGQSTIYFEGNGKKVIVDPFISGNDKCDLDEQTLEVDYIILTHGHADHFGDVVELANRNHATVIGSAELQGYLSTYHGVENVHGMNIGGKAKFDFGTVKFVQAFHSSSFTHDNGVPVYLGMPMGIIVEAEGKTIYHTGDTGLFSDMKLIADRHPVDVCFVPIGDNFTMGIEDASYAINEFIKPTISVPIHYNTFPLIEQDPEQFKDAVQVGEVQILKPGESVEF</sequence>
<keyword id="KW-0378">Hydrolase</keyword>
<feature type="chain" id="PRO_0000156384" description="UPF0173 metal-dependent hydrolase SE_1382">
    <location>
        <begin position="1"/>
        <end position="229"/>
    </location>
</feature>
<gene>
    <name type="ordered locus">SE_1382</name>
</gene>
<organism>
    <name type="scientific">Staphylococcus epidermidis (strain ATCC 12228 / FDA PCI 1200)</name>
    <dbReference type="NCBI Taxonomy" id="176280"/>
    <lineage>
        <taxon>Bacteria</taxon>
        <taxon>Bacillati</taxon>
        <taxon>Bacillota</taxon>
        <taxon>Bacilli</taxon>
        <taxon>Bacillales</taxon>
        <taxon>Staphylococcaceae</taxon>
        <taxon>Staphylococcus</taxon>
    </lineage>
</organism>
<name>Y1382_STAES</name>
<protein>
    <recommendedName>
        <fullName evidence="1">UPF0173 metal-dependent hydrolase SE_1382</fullName>
    </recommendedName>
</protein>
<evidence type="ECO:0000255" key="1">
    <source>
        <dbReference type="HAMAP-Rule" id="MF_00457"/>
    </source>
</evidence>
<comment type="similarity">
    <text evidence="1">Belongs to the UPF0173 family.</text>
</comment>
<dbReference type="EMBL" id="AE015929">
    <property type="protein sequence ID" value="AAO04981.1"/>
    <property type="molecule type" value="Genomic_DNA"/>
</dbReference>
<dbReference type="RefSeq" id="NP_764937.1">
    <property type="nucleotide sequence ID" value="NC_004461.1"/>
</dbReference>
<dbReference type="RefSeq" id="WP_001830786.1">
    <property type="nucleotide sequence ID" value="NZ_WBME01000042.1"/>
</dbReference>
<dbReference type="SMR" id="Q8CS62"/>
<dbReference type="KEGG" id="sep:SE_1382"/>
<dbReference type="PATRIC" id="fig|176280.10.peg.1350"/>
<dbReference type="eggNOG" id="COG2220">
    <property type="taxonomic scope" value="Bacteria"/>
</dbReference>
<dbReference type="HOGENOM" id="CLU_070010_4_1_9"/>
<dbReference type="OrthoDB" id="9789133at2"/>
<dbReference type="Proteomes" id="UP000001411">
    <property type="component" value="Chromosome"/>
</dbReference>
<dbReference type="GO" id="GO:0016787">
    <property type="term" value="F:hydrolase activity"/>
    <property type="evidence" value="ECO:0007669"/>
    <property type="project" value="UniProtKB-UniRule"/>
</dbReference>
<dbReference type="Gene3D" id="3.60.15.10">
    <property type="entry name" value="Ribonuclease Z/Hydroxyacylglutathione hydrolase-like"/>
    <property type="match status" value="1"/>
</dbReference>
<dbReference type="HAMAP" id="MF_00457">
    <property type="entry name" value="UPF0173"/>
    <property type="match status" value="1"/>
</dbReference>
<dbReference type="InterPro" id="IPR001279">
    <property type="entry name" value="Metallo-B-lactamas"/>
</dbReference>
<dbReference type="InterPro" id="IPR036866">
    <property type="entry name" value="RibonucZ/Hydroxyglut_hydro"/>
</dbReference>
<dbReference type="InterPro" id="IPR022877">
    <property type="entry name" value="UPF0173"/>
</dbReference>
<dbReference type="InterPro" id="IPR050114">
    <property type="entry name" value="UPF0173_UPF0282_UlaG_hydrolase"/>
</dbReference>
<dbReference type="NCBIfam" id="NF001911">
    <property type="entry name" value="PRK00685.1"/>
    <property type="match status" value="1"/>
</dbReference>
<dbReference type="PANTHER" id="PTHR43546:SF3">
    <property type="entry name" value="UPF0173 METAL-DEPENDENT HYDROLASE MJ1163"/>
    <property type="match status" value="1"/>
</dbReference>
<dbReference type="PANTHER" id="PTHR43546">
    <property type="entry name" value="UPF0173 METAL-DEPENDENT HYDROLASE MJ1163-RELATED"/>
    <property type="match status" value="1"/>
</dbReference>
<dbReference type="Pfam" id="PF12706">
    <property type="entry name" value="Lactamase_B_2"/>
    <property type="match status" value="1"/>
</dbReference>
<dbReference type="SMART" id="SM00849">
    <property type="entry name" value="Lactamase_B"/>
    <property type="match status" value="1"/>
</dbReference>
<dbReference type="SUPFAM" id="SSF56281">
    <property type="entry name" value="Metallo-hydrolase/oxidoreductase"/>
    <property type="match status" value="1"/>
</dbReference>